<keyword id="KW-0028">Amino-acid biosynthesis</keyword>
<keyword id="KW-0055">Arginine biosynthesis</keyword>
<keyword id="KW-0963">Cytoplasm</keyword>
<keyword id="KW-0456">Lyase</keyword>
<keyword id="KW-1185">Reference proteome</keyword>
<sequence>MTKLWGGRFQKETDRLVEDFHSSISFDRRLYKYDIRGSIAHARMLGKAGIIPPEEARAIADGLQEVLADIEAGRAGFSVEAEDIHMNVEQLLTAKVGEVGKKLHTARSRNDQVALDIRMYLKDEIDQITGLLRELQAALLDLAEKHTGTVMPGYTHLQRAQPVTLAHHLLAYCQMFRRDEERLADCRRRTDVMPLGAGALAGTTFPLDREYVAEQLGFAAVAENSLDAVSDRDFAVEFAAAASLIMVHLSRFCEEIVLWSSAEFAFIELDDAYSTGSSMMPQKKNPDVAELIRGKCGRVFGDLQALLTMLKGLPLAYNKDLQEDKEALFDAVDTVKKCLLVFKPMLETMQVKKERMAEAARGGFTNATDLADYLVRKGLPFRQAHEAVGKAVLYCLERGRSLDRLSLDELRQFSPLVEEDVYEAIDISRCVEARRVTGGPAPGAVLEAVKKARQRLRERP</sequence>
<evidence type="ECO:0000255" key="1">
    <source>
        <dbReference type="HAMAP-Rule" id="MF_00006"/>
    </source>
</evidence>
<feature type="chain" id="PRO_0000335829" description="Argininosuccinate lyase">
    <location>
        <begin position="1"/>
        <end position="460"/>
    </location>
</feature>
<accession>A5D4Y2</accession>
<organism>
    <name type="scientific">Pelotomaculum thermopropionicum (strain DSM 13744 / JCM 10971 / SI)</name>
    <dbReference type="NCBI Taxonomy" id="370438"/>
    <lineage>
        <taxon>Bacteria</taxon>
        <taxon>Bacillati</taxon>
        <taxon>Bacillota</taxon>
        <taxon>Clostridia</taxon>
        <taxon>Eubacteriales</taxon>
        <taxon>Desulfotomaculaceae</taxon>
        <taxon>Pelotomaculum</taxon>
    </lineage>
</organism>
<reference key="1">
    <citation type="journal article" date="2008" name="Genome Res.">
        <title>The genome of Pelotomaculum thermopropionicum reveals niche-associated evolution in anaerobic microbiota.</title>
        <authorList>
            <person name="Kosaka T."/>
            <person name="Kato S."/>
            <person name="Shimoyama T."/>
            <person name="Ishii S."/>
            <person name="Abe T."/>
            <person name="Watanabe K."/>
        </authorList>
    </citation>
    <scope>NUCLEOTIDE SEQUENCE [LARGE SCALE GENOMIC DNA]</scope>
    <source>
        <strain>DSM 13744 / JCM 10971 / SI</strain>
    </source>
</reference>
<protein>
    <recommendedName>
        <fullName evidence="1">Argininosuccinate lyase</fullName>
        <shortName evidence="1">ASAL</shortName>
        <ecNumber evidence="1">4.3.2.1</ecNumber>
    </recommendedName>
    <alternativeName>
        <fullName evidence="1">Arginosuccinase</fullName>
    </alternativeName>
</protein>
<name>ARLY_PELTS</name>
<comment type="catalytic activity">
    <reaction evidence="1">
        <text>2-(N(omega)-L-arginino)succinate = fumarate + L-arginine</text>
        <dbReference type="Rhea" id="RHEA:24020"/>
        <dbReference type="ChEBI" id="CHEBI:29806"/>
        <dbReference type="ChEBI" id="CHEBI:32682"/>
        <dbReference type="ChEBI" id="CHEBI:57472"/>
        <dbReference type="EC" id="4.3.2.1"/>
    </reaction>
</comment>
<comment type="pathway">
    <text evidence="1">Amino-acid biosynthesis; L-arginine biosynthesis; L-arginine from L-ornithine and carbamoyl phosphate: step 3/3.</text>
</comment>
<comment type="subcellular location">
    <subcellularLocation>
        <location evidence="1">Cytoplasm</location>
    </subcellularLocation>
</comment>
<comment type="similarity">
    <text evidence="1">Belongs to the lyase 1 family. Argininosuccinate lyase subfamily.</text>
</comment>
<gene>
    <name evidence="1" type="primary">argH</name>
    <name type="ordered locus">PTH_0517</name>
</gene>
<dbReference type="EC" id="4.3.2.1" evidence="1"/>
<dbReference type="EMBL" id="AP009389">
    <property type="protein sequence ID" value="BAF58698.1"/>
    <property type="molecule type" value="Genomic_DNA"/>
</dbReference>
<dbReference type="SMR" id="A5D4Y2"/>
<dbReference type="STRING" id="370438.PTH_0517"/>
<dbReference type="KEGG" id="pth:PTH_0517"/>
<dbReference type="eggNOG" id="COG0165">
    <property type="taxonomic scope" value="Bacteria"/>
</dbReference>
<dbReference type="HOGENOM" id="CLU_027272_2_3_9"/>
<dbReference type="UniPathway" id="UPA00068">
    <property type="reaction ID" value="UER00114"/>
</dbReference>
<dbReference type="Proteomes" id="UP000006556">
    <property type="component" value="Chromosome"/>
</dbReference>
<dbReference type="GO" id="GO:0005829">
    <property type="term" value="C:cytosol"/>
    <property type="evidence" value="ECO:0007669"/>
    <property type="project" value="TreeGrafter"/>
</dbReference>
<dbReference type="GO" id="GO:0004056">
    <property type="term" value="F:argininosuccinate lyase activity"/>
    <property type="evidence" value="ECO:0007669"/>
    <property type="project" value="UniProtKB-UniRule"/>
</dbReference>
<dbReference type="GO" id="GO:0042450">
    <property type="term" value="P:arginine biosynthetic process via ornithine"/>
    <property type="evidence" value="ECO:0007669"/>
    <property type="project" value="InterPro"/>
</dbReference>
<dbReference type="GO" id="GO:0006526">
    <property type="term" value="P:L-arginine biosynthetic process"/>
    <property type="evidence" value="ECO:0007669"/>
    <property type="project" value="UniProtKB-UniRule"/>
</dbReference>
<dbReference type="CDD" id="cd01359">
    <property type="entry name" value="Argininosuccinate_lyase"/>
    <property type="match status" value="1"/>
</dbReference>
<dbReference type="FunFam" id="1.10.275.10:FF:000002">
    <property type="entry name" value="Argininosuccinate lyase"/>
    <property type="match status" value="1"/>
</dbReference>
<dbReference type="FunFam" id="1.10.40.30:FF:000001">
    <property type="entry name" value="Argininosuccinate lyase"/>
    <property type="match status" value="1"/>
</dbReference>
<dbReference type="FunFam" id="1.20.200.10:FF:000006">
    <property type="entry name" value="Argininosuccinate lyase"/>
    <property type="match status" value="1"/>
</dbReference>
<dbReference type="Gene3D" id="1.10.40.30">
    <property type="entry name" value="Fumarase/aspartase (C-terminal domain)"/>
    <property type="match status" value="1"/>
</dbReference>
<dbReference type="Gene3D" id="1.20.200.10">
    <property type="entry name" value="Fumarase/aspartase (Central domain)"/>
    <property type="match status" value="1"/>
</dbReference>
<dbReference type="Gene3D" id="1.10.275.10">
    <property type="entry name" value="Fumarase/aspartase (N-terminal domain)"/>
    <property type="match status" value="1"/>
</dbReference>
<dbReference type="HAMAP" id="MF_00006">
    <property type="entry name" value="Arg_succ_lyase"/>
    <property type="match status" value="1"/>
</dbReference>
<dbReference type="InterPro" id="IPR029419">
    <property type="entry name" value="Arg_succ_lyase_C"/>
</dbReference>
<dbReference type="InterPro" id="IPR009049">
    <property type="entry name" value="Argininosuccinate_lyase"/>
</dbReference>
<dbReference type="InterPro" id="IPR024083">
    <property type="entry name" value="Fumarase/histidase_N"/>
</dbReference>
<dbReference type="InterPro" id="IPR020557">
    <property type="entry name" value="Fumarate_lyase_CS"/>
</dbReference>
<dbReference type="InterPro" id="IPR000362">
    <property type="entry name" value="Fumarate_lyase_fam"/>
</dbReference>
<dbReference type="InterPro" id="IPR022761">
    <property type="entry name" value="Fumarate_lyase_N"/>
</dbReference>
<dbReference type="InterPro" id="IPR008948">
    <property type="entry name" value="L-Aspartase-like"/>
</dbReference>
<dbReference type="NCBIfam" id="TIGR00838">
    <property type="entry name" value="argH"/>
    <property type="match status" value="1"/>
</dbReference>
<dbReference type="PANTHER" id="PTHR43814">
    <property type="entry name" value="ARGININOSUCCINATE LYASE"/>
    <property type="match status" value="1"/>
</dbReference>
<dbReference type="PANTHER" id="PTHR43814:SF1">
    <property type="entry name" value="ARGININOSUCCINATE LYASE"/>
    <property type="match status" value="1"/>
</dbReference>
<dbReference type="Pfam" id="PF14698">
    <property type="entry name" value="ASL_C2"/>
    <property type="match status" value="1"/>
</dbReference>
<dbReference type="Pfam" id="PF00206">
    <property type="entry name" value="Lyase_1"/>
    <property type="match status" value="1"/>
</dbReference>
<dbReference type="PRINTS" id="PR00145">
    <property type="entry name" value="ARGSUCLYASE"/>
</dbReference>
<dbReference type="PRINTS" id="PR00149">
    <property type="entry name" value="FUMRATELYASE"/>
</dbReference>
<dbReference type="SUPFAM" id="SSF48557">
    <property type="entry name" value="L-aspartase-like"/>
    <property type="match status" value="1"/>
</dbReference>
<dbReference type="PROSITE" id="PS00163">
    <property type="entry name" value="FUMARATE_LYASES"/>
    <property type="match status" value="1"/>
</dbReference>
<proteinExistence type="inferred from homology"/>